<reference key="1">
    <citation type="journal article" date="2008" name="Appl. Environ. Microbiol.">
        <title>Genome of the epsilonproteobacterial chemolithoautotroph Sulfurimonas denitrificans.</title>
        <authorList>
            <person name="Sievert S.M."/>
            <person name="Scott K.M."/>
            <person name="Klotz M.G."/>
            <person name="Chain P.S.G."/>
            <person name="Hauser L.J."/>
            <person name="Hemp J."/>
            <person name="Huegler M."/>
            <person name="Land M."/>
            <person name="Lapidus A."/>
            <person name="Larimer F.W."/>
            <person name="Lucas S."/>
            <person name="Malfatti S.A."/>
            <person name="Meyer F."/>
            <person name="Paulsen I.T."/>
            <person name="Ren Q."/>
            <person name="Simon J."/>
            <person name="Bailey K."/>
            <person name="Diaz E."/>
            <person name="Fitzpatrick K.A."/>
            <person name="Glover B."/>
            <person name="Gwatney N."/>
            <person name="Korajkic A."/>
            <person name="Long A."/>
            <person name="Mobberley J.M."/>
            <person name="Pantry S.N."/>
            <person name="Pazder G."/>
            <person name="Peterson S."/>
            <person name="Quintanilla J.D."/>
            <person name="Sprinkle R."/>
            <person name="Stephens J."/>
            <person name="Thomas P."/>
            <person name="Vaughn R."/>
            <person name="Weber M.J."/>
            <person name="Wooten L.L."/>
        </authorList>
    </citation>
    <scope>NUCLEOTIDE SEQUENCE [LARGE SCALE GENOMIC DNA]</scope>
    <source>
        <strain>ATCC 33889 / DSM 1251</strain>
    </source>
</reference>
<sequence length="188" mass="21095">MATIGMGDIKKNIRLIIGEVPCKVIEFQHVKPGKGAAFVRMKAKSFLNGRVFEKTVHAGDKFEVPEITFKTMQYLYDDGEQYQFMDNDSYEQIGLSYEQCDDASKWFKDGIQVDMIFYKGNAISVSAPEVMELLITDTPPNFKGDTSSGSKKPATLETGAVVQVPYHVLEGDTIRVNTVDCEYLEKVK</sequence>
<dbReference type="EMBL" id="CP000153">
    <property type="protein sequence ID" value="ABB44186.1"/>
    <property type="molecule type" value="Genomic_DNA"/>
</dbReference>
<dbReference type="RefSeq" id="WP_011372538.1">
    <property type="nucleotide sequence ID" value="NC_007575.1"/>
</dbReference>
<dbReference type="SMR" id="Q30S45"/>
<dbReference type="STRING" id="326298.Suden_0908"/>
<dbReference type="KEGG" id="tdn:Suden_0908"/>
<dbReference type="eggNOG" id="COG0231">
    <property type="taxonomic scope" value="Bacteria"/>
</dbReference>
<dbReference type="HOGENOM" id="CLU_074944_0_1_7"/>
<dbReference type="OrthoDB" id="9801844at2"/>
<dbReference type="UniPathway" id="UPA00345"/>
<dbReference type="Proteomes" id="UP000002714">
    <property type="component" value="Chromosome"/>
</dbReference>
<dbReference type="GO" id="GO:0005737">
    <property type="term" value="C:cytoplasm"/>
    <property type="evidence" value="ECO:0007669"/>
    <property type="project" value="UniProtKB-SubCell"/>
</dbReference>
<dbReference type="GO" id="GO:0003746">
    <property type="term" value="F:translation elongation factor activity"/>
    <property type="evidence" value="ECO:0007669"/>
    <property type="project" value="UniProtKB-UniRule"/>
</dbReference>
<dbReference type="GO" id="GO:0043043">
    <property type="term" value="P:peptide biosynthetic process"/>
    <property type="evidence" value="ECO:0007669"/>
    <property type="project" value="InterPro"/>
</dbReference>
<dbReference type="CDD" id="cd04470">
    <property type="entry name" value="S1_EF-P_repeat_1"/>
    <property type="match status" value="1"/>
</dbReference>
<dbReference type="CDD" id="cd05794">
    <property type="entry name" value="S1_EF-P_repeat_2"/>
    <property type="match status" value="1"/>
</dbReference>
<dbReference type="FunFam" id="2.30.30.30:FF:000003">
    <property type="entry name" value="Elongation factor P"/>
    <property type="match status" value="1"/>
</dbReference>
<dbReference type="FunFam" id="2.40.50.140:FF:000004">
    <property type="entry name" value="Elongation factor P"/>
    <property type="match status" value="1"/>
</dbReference>
<dbReference type="FunFam" id="2.40.50.140:FF:000009">
    <property type="entry name" value="Elongation factor P"/>
    <property type="match status" value="1"/>
</dbReference>
<dbReference type="Gene3D" id="2.30.30.30">
    <property type="match status" value="1"/>
</dbReference>
<dbReference type="Gene3D" id="2.40.50.140">
    <property type="entry name" value="Nucleic acid-binding proteins"/>
    <property type="match status" value="2"/>
</dbReference>
<dbReference type="HAMAP" id="MF_00141">
    <property type="entry name" value="EF_P"/>
    <property type="match status" value="1"/>
</dbReference>
<dbReference type="InterPro" id="IPR015365">
    <property type="entry name" value="Elong-fact-P_C"/>
</dbReference>
<dbReference type="InterPro" id="IPR012340">
    <property type="entry name" value="NA-bd_OB-fold"/>
</dbReference>
<dbReference type="InterPro" id="IPR014722">
    <property type="entry name" value="Rib_uL2_dom2"/>
</dbReference>
<dbReference type="InterPro" id="IPR020599">
    <property type="entry name" value="Transl_elong_fac_P/YeiP"/>
</dbReference>
<dbReference type="InterPro" id="IPR013185">
    <property type="entry name" value="Transl_elong_KOW-like"/>
</dbReference>
<dbReference type="InterPro" id="IPR001059">
    <property type="entry name" value="Transl_elong_P/YeiP_cen"/>
</dbReference>
<dbReference type="InterPro" id="IPR013852">
    <property type="entry name" value="Transl_elong_P/YeiP_CS"/>
</dbReference>
<dbReference type="InterPro" id="IPR011768">
    <property type="entry name" value="Transl_elongation_fac_P"/>
</dbReference>
<dbReference type="InterPro" id="IPR008991">
    <property type="entry name" value="Translation_prot_SH3-like_sf"/>
</dbReference>
<dbReference type="NCBIfam" id="TIGR00038">
    <property type="entry name" value="efp"/>
    <property type="match status" value="1"/>
</dbReference>
<dbReference type="NCBIfam" id="NF001810">
    <property type="entry name" value="PRK00529.1"/>
    <property type="match status" value="1"/>
</dbReference>
<dbReference type="PANTHER" id="PTHR30053">
    <property type="entry name" value="ELONGATION FACTOR P"/>
    <property type="match status" value="1"/>
</dbReference>
<dbReference type="PANTHER" id="PTHR30053:SF12">
    <property type="entry name" value="ELONGATION FACTOR P (EF-P) FAMILY PROTEIN"/>
    <property type="match status" value="1"/>
</dbReference>
<dbReference type="Pfam" id="PF01132">
    <property type="entry name" value="EFP"/>
    <property type="match status" value="1"/>
</dbReference>
<dbReference type="Pfam" id="PF08207">
    <property type="entry name" value="EFP_N"/>
    <property type="match status" value="1"/>
</dbReference>
<dbReference type="Pfam" id="PF09285">
    <property type="entry name" value="Elong-fact-P_C"/>
    <property type="match status" value="1"/>
</dbReference>
<dbReference type="PIRSF" id="PIRSF005901">
    <property type="entry name" value="EF-P"/>
    <property type="match status" value="1"/>
</dbReference>
<dbReference type="SMART" id="SM01185">
    <property type="entry name" value="EFP"/>
    <property type="match status" value="1"/>
</dbReference>
<dbReference type="SMART" id="SM00841">
    <property type="entry name" value="Elong-fact-P_C"/>
    <property type="match status" value="1"/>
</dbReference>
<dbReference type="SUPFAM" id="SSF50249">
    <property type="entry name" value="Nucleic acid-binding proteins"/>
    <property type="match status" value="2"/>
</dbReference>
<dbReference type="SUPFAM" id="SSF50104">
    <property type="entry name" value="Translation proteins SH3-like domain"/>
    <property type="match status" value="1"/>
</dbReference>
<dbReference type="PROSITE" id="PS01275">
    <property type="entry name" value="EFP"/>
    <property type="match status" value="1"/>
</dbReference>
<name>EFP_SULDN</name>
<accession>Q30S45</accession>
<proteinExistence type="inferred from homology"/>
<feature type="chain" id="PRO_1000010893" description="Elongation factor P">
    <location>
        <begin position="1"/>
        <end position="188"/>
    </location>
</feature>
<evidence type="ECO:0000255" key="1">
    <source>
        <dbReference type="HAMAP-Rule" id="MF_00141"/>
    </source>
</evidence>
<gene>
    <name evidence="1" type="primary">efp</name>
    <name type="ordered locus">Suden_0908</name>
</gene>
<keyword id="KW-0963">Cytoplasm</keyword>
<keyword id="KW-0251">Elongation factor</keyword>
<keyword id="KW-0648">Protein biosynthesis</keyword>
<keyword id="KW-1185">Reference proteome</keyword>
<comment type="function">
    <text evidence="1">Involved in peptide bond synthesis. Stimulates efficient translation and peptide-bond synthesis on native or reconstituted 70S ribosomes in vitro. Probably functions indirectly by altering the affinity of the ribosome for aminoacyl-tRNA, thus increasing their reactivity as acceptors for peptidyl transferase.</text>
</comment>
<comment type="pathway">
    <text evidence="1">Protein biosynthesis; polypeptide chain elongation.</text>
</comment>
<comment type="subcellular location">
    <subcellularLocation>
        <location evidence="1">Cytoplasm</location>
    </subcellularLocation>
</comment>
<comment type="similarity">
    <text evidence="1">Belongs to the elongation factor P family.</text>
</comment>
<protein>
    <recommendedName>
        <fullName evidence="1">Elongation factor P</fullName>
        <shortName evidence="1">EF-P</shortName>
    </recommendedName>
</protein>
<organism>
    <name type="scientific">Sulfurimonas denitrificans (strain ATCC 33889 / DSM 1251)</name>
    <name type="common">Thiomicrospira denitrificans (strain ATCC 33889 / DSM 1251)</name>
    <dbReference type="NCBI Taxonomy" id="326298"/>
    <lineage>
        <taxon>Bacteria</taxon>
        <taxon>Pseudomonadati</taxon>
        <taxon>Campylobacterota</taxon>
        <taxon>Epsilonproteobacteria</taxon>
        <taxon>Campylobacterales</taxon>
        <taxon>Sulfurimonadaceae</taxon>
        <taxon>Sulfurimonas</taxon>
    </lineage>
</organism>